<reference key="1">
    <citation type="journal article" date="2008" name="Genome Res.">
        <title>Comparative genome analysis of Salmonella enteritidis PT4 and Salmonella gallinarum 287/91 provides insights into evolutionary and host adaptation pathways.</title>
        <authorList>
            <person name="Thomson N.R."/>
            <person name="Clayton D.J."/>
            <person name="Windhorst D."/>
            <person name="Vernikos G."/>
            <person name="Davidson S."/>
            <person name="Churcher C."/>
            <person name="Quail M.A."/>
            <person name="Stevens M."/>
            <person name="Jones M.A."/>
            <person name="Watson M."/>
            <person name="Barron A."/>
            <person name="Layton A."/>
            <person name="Pickard D."/>
            <person name="Kingsley R.A."/>
            <person name="Bignell A."/>
            <person name="Clark L."/>
            <person name="Harris B."/>
            <person name="Ormond D."/>
            <person name="Abdellah Z."/>
            <person name="Brooks K."/>
            <person name="Cherevach I."/>
            <person name="Chillingworth T."/>
            <person name="Woodward J."/>
            <person name="Norberczak H."/>
            <person name="Lord A."/>
            <person name="Arrowsmith C."/>
            <person name="Jagels K."/>
            <person name="Moule S."/>
            <person name="Mungall K."/>
            <person name="Saunders M."/>
            <person name="Whitehead S."/>
            <person name="Chabalgoity J.A."/>
            <person name="Maskell D."/>
            <person name="Humphreys T."/>
            <person name="Roberts M."/>
            <person name="Barrow P.A."/>
            <person name="Dougan G."/>
            <person name="Parkhill J."/>
        </authorList>
    </citation>
    <scope>NUCLEOTIDE SEQUENCE [LARGE SCALE GENOMIC DNA]</scope>
    <source>
        <strain>287/91 / NCTC 13346</strain>
    </source>
</reference>
<protein>
    <recommendedName>
        <fullName evidence="1">Nucleoside triphosphatase NudI</fullName>
        <ecNumber evidence="1">3.6.1.9</ecNumber>
    </recommendedName>
    <alternativeName>
        <fullName evidence="1">Nucleotide diphosphatase NudI</fullName>
    </alternativeName>
    <alternativeName>
        <fullName evidence="1">Pyrimidine deoxynucleoside triphosphate diphosphatase</fullName>
    </alternativeName>
    <alternativeName>
        <fullName evidence="1">dCTP diphosphatase</fullName>
        <ecNumber evidence="1">3.6.1.12</ecNumber>
    </alternativeName>
    <alternativeName>
        <fullName evidence="1">dTTP diphosphatase</fullName>
        <ecNumber evidence="1">3.6.1.-</ecNumber>
    </alternativeName>
    <alternativeName>
        <fullName evidence="1">dUTP diphosphatase</fullName>
        <ecNumber evidence="1">3.6.1.23</ecNumber>
    </alternativeName>
</protein>
<gene>
    <name evidence="1" type="primary">nudI</name>
    <name type="ordered locus">SG2324</name>
</gene>
<comment type="function">
    <text evidence="1">Catalyzes the hydrolysis of nucleoside triphosphates, with a preference for pyrimidine deoxynucleoside triphosphates (dUTP, dTTP and dCTP).</text>
</comment>
<comment type="catalytic activity">
    <reaction evidence="1">
        <text>a ribonucleoside 5'-triphosphate + H2O = a ribonucleoside 5'-phosphate + diphosphate + H(+)</text>
        <dbReference type="Rhea" id="RHEA:23996"/>
        <dbReference type="ChEBI" id="CHEBI:15377"/>
        <dbReference type="ChEBI" id="CHEBI:15378"/>
        <dbReference type="ChEBI" id="CHEBI:33019"/>
        <dbReference type="ChEBI" id="CHEBI:58043"/>
        <dbReference type="ChEBI" id="CHEBI:61557"/>
        <dbReference type="EC" id="3.6.1.9"/>
    </reaction>
</comment>
<comment type="catalytic activity">
    <reaction evidence="1">
        <text>a 2'-deoxyribonucleoside 5'-triphosphate + H2O = a 2'-deoxyribonucleoside 5'-phosphate + diphosphate + H(+)</text>
        <dbReference type="Rhea" id="RHEA:44644"/>
        <dbReference type="ChEBI" id="CHEBI:15377"/>
        <dbReference type="ChEBI" id="CHEBI:15378"/>
        <dbReference type="ChEBI" id="CHEBI:33019"/>
        <dbReference type="ChEBI" id="CHEBI:61560"/>
        <dbReference type="ChEBI" id="CHEBI:65317"/>
        <dbReference type="EC" id="3.6.1.9"/>
    </reaction>
</comment>
<comment type="catalytic activity">
    <reaction evidence="1">
        <text>dUTP + H2O = dUMP + diphosphate + H(+)</text>
        <dbReference type="Rhea" id="RHEA:10248"/>
        <dbReference type="ChEBI" id="CHEBI:15377"/>
        <dbReference type="ChEBI" id="CHEBI:15378"/>
        <dbReference type="ChEBI" id="CHEBI:33019"/>
        <dbReference type="ChEBI" id="CHEBI:61555"/>
        <dbReference type="ChEBI" id="CHEBI:246422"/>
        <dbReference type="EC" id="3.6.1.9"/>
    </reaction>
</comment>
<comment type="catalytic activity">
    <reaction evidence="1">
        <text>dUTP + H2O = dUMP + diphosphate + H(+)</text>
        <dbReference type="Rhea" id="RHEA:10248"/>
        <dbReference type="ChEBI" id="CHEBI:15377"/>
        <dbReference type="ChEBI" id="CHEBI:15378"/>
        <dbReference type="ChEBI" id="CHEBI:33019"/>
        <dbReference type="ChEBI" id="CHEBI:61555"/>
        <dbReference type="ChEBI" id="CHEBI:246422"/>
        <dbReference type="EC" id="3.6.1.23"/>
    </reaction>
</comment>
<comment type="catalytic activity">
    <reaction evidence="1">
        <text>dTTP + H2O = dTMP + diphosphate + H(+)</text>
        <dbReference type="Rhea" id="RHEA:28534"/>
        <dbReference type="ChEBI" id="CHEBI:15377"/>
        <dbReference type="ChEBI" id="CHEBI:15378"/>
        <dbReference type="ChEBI" id="CHEBI:33019"/>
        <dbReference type="ChEBI" id="CHEBI:37568"/>
        <dbReference type="ChEBI" id="CHEBI:63528"/>
        <dbReference type="EC" id="3.6.1.9"/>
    </reaction>
</comment>
<comment type="catalytic activity">
    <reaction evidence="1">
        <text>dCTP + H2O = dCMP + diphosphate + H(+)</text>
        <dbReference type="Rhea" id="RHEA:22636"/>
        <dbReference type="ChEBI" id="CHEBI:15377"/>
        <dbReference type="ChEBI" id="CHEBI:15378"/>
        <dbReference type="ChEBI" id="CHEBI:33019"/>
        <dbReference type="ChEBI" id="CHEBI:57566"/>
        <dbReference type="ChEBI" id="CHEBI:61481"/>
        <dbReference type="EC" id="3.6.1.9"/>
    </reaction>
</comment>
<comment type="catalytic activity">
    <reaction evidence="1">
        <text>dCTP + H2O = dCMP + diphosphate + H(+)</text>
        <dbReference type="Rhea" id="RHEA:22636"/>
        <dbReference type="ChEBI" id="CHEBI:15377"/>
        <dbReference type="ChEBI" id="CHEBI:15378"/>
        <dbReference type="ChEBI" id="CHEBI:33019"/>
        <dbReference type="ChEBI" id="CHEBI:57566"/>
        <dbReference type="ChEBI" id="CHEBI:61481"/>
        <dbReference type="EC" id="3.6.1.12"/>
    </reaction>
</comment>
<comment type="cofactor">
    <cofactor evidence="1">
        <name>Mg(2+)</name>
        <dbReference type="ChEBI" id="CHEBI:18420"/>
    </cofactor>
</comment>
<comment type="subunit">
    <text evidence="1">Monomer.</text>
</comment>
<comment type="similarity">
    <text evidence="1">Belongs to the Nudix hydrolase family. NudI subfamily.</text>
</comment>
<dbReference type="EC" id="3.6.1.9" evidence="1"/>
<dbReference type="EC" id="3.6.1.12" evidence="1"/>
<dbReference type="EC" id="3.6.1.-" evidence="1"/>
<dbReference type="EC" id="3.6.1.23" evidence="1"/>
<dbReference type="EMBL" id="AM933173">
    <property type="protein sequence ID" value="CAR38154.1"/>
    <property type="molecule type" value="Genomic_DNA"/>
</dbReference>
<dbReference type="RefSeq" id="WP_001249902.1">
    <property type="nucleotide sequence ID" value="NC_011274.1"/>
</dbReference>
<dbReference type="SMR" id="B5RCC0"/>
<dbReference type="KEGG" id="seg:SG2324"/>
<dbReference type="HOGENOM" id="CLU_037162_31_0_6"/>
<dbReference type="Proteomes" id="UP000008321">
    <property type="component" value="Chromosome"/>
</dbReference>
<dbReference type="GO" id="GO:0047840">
    <property type="term" value="F:dCTP diphosphatase activity"/>
    <property type="evidence" value="ECO:0007669"/>
    <property type="project" value="UniProtKB-EC"/>
</dbReference>
<dbReference type="GO" id="GO:0036218">
    <property type="term" value="F:dTTP diphosphatase activity"/>
    <property type="evidence" value="ECO:0007669"/>
    <property type="project" value="RHEA"/>
</dbReference>
<dbReference type="GO" id="GO:0004170">
    <property type="term" value="F:dUTP diphosphatase activity"/>
    <property type="evidence" value="ECO:0007669"/>
    <property type="project" value="UniProtKB-EC"/>
</dbReference>
<dbReference type="GO" id="GO:0000287">
    <property type="term" value="F:magnesium ion binding"/>
    <property type="evidence" value="ECO:0007669"/>
    <property type="project" value="UniProtKB-UniRule"/>
</dbReference>
<dbReference type="CDD" id="cd04696">
    <property type="entry name" value="NUDIX_NudI"/>
    <property type="match status" value="1"/>
</dbReference>
<dbReference type="Gene3D" id="3.90.79.10">
    <property type="entry name" value="Nucleoside Triphosphate Pyrophosphohydrolase"/>
    <property type="match status" value="1"/>
</dbReference>
<dbReference type="HAMAP" id="MF_01846">
    <property type="entry name" value="Nudix_NudI"/>
    <property type="match status" value="1"/>
</dbReference>
<dbReference type="InterPro" id="IPR023781">
    <property type="entry name" value="Nucleoside_triphosphatase_NudI"/>
</dbReference>
<dbReference type="InterPro" id="IPR020476">
    <property type="entry name" value="Nudix_hydrolase"/>
</dbReference>
<dbReference type="InterPro" id="IPR015797">
    <property type="entry name" value="NUDIX_hydrolase-like_dom_sf"/>
</dbReference>
<dbReference type="InterPro" id="IPR020084">
    <property type="entry name" value="NUDIX_hydrolase_CS"/>
</dbReference>
<dbReference type="InterPro" id="IPR000086">
    <property type="entry name" value="NUDIX_hydrolase_dom"/>
</dbReference>
<dbReference type="NCBIfam" id="NF012016">
    <property type="entry name" value="PRK15472.1"/>
    <property type="match status" value="1"/>
</dbReference>
<dbReference type="PANTHER" id="PTHR43046">
    <property type="entry name" value="GDP-MANNOSE MANNOSYL HYDROLASE"/>
    <property type="match status" value="1"/>
</dbReference>
<dbReference type="PANTHER" id="PTHR43046:SF14">
    <property type="entry name" value="MUTT_NUDIX FAMILY PROTEIN"/>
    <property type="match status" value="1"/>
</dbReference>
<dbReference type="Pfam" id="PF00293">
    <property type="entry name" value="NUDIX"/>
    <property type="match status" value="1"/>
</dbReference>
<dbReference type="PRINTS" id="PR00502">
    <property type="entry name" value="NUDIXFAMILY"/>
</dbReference>
<dbReference type="SUPFAM" id="SSF55811">
    <property type="entry name" value="Nudix"/>
    <property type="match status" value="1"/>
</dbReference>
<dbReference type="PROSITE" id="PS51462">
    <property type="entry name" value="NUDIX"/>
    <property type="match status" value="1"/>
</dbReference>
<dbReference type="PROSITE" id="PS00893">
    <property type="entry name" value="NUDIX_BOX"/>
    <property type="match status" value="1"/>
</dbReference>
<evidence type="ECO:0000255" key="1">
    <source>
        <dbReference type="HAMAP-Rule" id="MF_01846"/>
    </source>
</evidence>
<proteinExistence type="inferred from homology"/>
<accession>B5RCC0</accession>
<name>NUDI_SALG2</name>
<keyword id="KW-0378">Hydrolase</keyword>
<keyword id="KW-0460">Magnesium</keyword>
<organism>
    <name type="scientific">Salmonella gallinarum (strain 287/91 / NCTC 13346)</name>
    <dbReference type="NCBI Taxonomy" id="550538"/>
    <lineage>
        <taxon>Bacteria</taxon>
        <taxon>Pseudomonadati</taxon>
        <taxon>Pseudomonadota</taxon>
        <taxon>Gammaproteobacteria</taxon>
        <taxon>Enterobacterales</taxon>
        <taxon>Enterobacteriaceae</taxon>
        <taxon>Salmonella</taxon>
    </lineage>
</organism>
<feature type="chain" id="PRO_1000188489" description="Nucleoside triphosphatase NudI">
    <location>
        <begin position="1"/>
        <end position="141"/>
    </location>
</feature>
<feature type="domain" description="Nudix hydrolase" evidence="1">
    <location>
        <begin position="1"/>
        <end position="141"/>
    </location>
</feature>
<feature type="short sequence motif" description="Nudix box">
    <location>
        <begin position="38"/>
        <end position="59"/>
    </location>
</feature>
<sequence>MRQRTIVCPLIQNDGCYLLCKMADNRGVFPGQWALSGGGVEPGERIEEALRREIREELGEQLILSDITPWTFRDDIRVKTYADGRQEEIYMIYLIFDCVSANRDICINDEFQDYAWVKPEELALYDLNVATRHTLALKGLL</sequence>